<feature type="chain" id="PRO_0000331321" description="Heme response regulator HssR">
    <location>
        <begin position="1"/>
        <end position="224"/>
    </location>
</feature>
<feature type="domain" description="Response regulatory" evidence="2">
    <location>
        <begin position="3"/>
        <end position="116"/>
    </location>
</feature>
<feature type="DNA-binding region" description="OmpR/PhoB-type" evidence="3">
    <location>
        <begin position="124"/>
        <end position="222"/>
    </location>
</feature>
<feature type="modified residue" description="4-aspartylphosphate" evidence="2">
    <location>
        <position position="52"/>
    </location>
</feature>
<organism>
    <name type="scientific">Staphylococcus aureus (strain JH1)</name>
    <dbReference type="NCBI Taxonomy" id="359787"/>
    <lineage>
        <taxon>Bacteria</taxon>
        <taxon>Bacillati</taxon>
        <taxon>Bacillota</taxon>
        <taxon>Bacilli</taxon>
        <taxon>Bacillales</taxon>
        <taxon>Staphylococcaceae</taxon>
        <taxon>Staphylococcus</taxon>
    </lineage>
</organism>
<name>HSSR_STAA2</name>
<comment type="function">
    <text evidence="1">Member of the two-component regulatory system HssS/HssR involved in intracellular heme homeostasis and tempering of staphylococcal virulence. Phosphorylated HssR binds to a direct repeat sequence within hrtAB promoter and activates the expression of hrtAB, an efflux pump, in response to extracellular heme, hemin, hemoglobin or blood (By similarity).</text>
</comment>
<comment type="subcellular location">
    <subcellularLocation>
        <location evidence="4">Cytoplasm</location>
    </subcellularLocation>
</comment>
<comment type="PTM">
    <text evidence="1">Phosphorylated by HssS.</text>
</comment>
<dbReference type="EMBL" id="CP000736">
    <property type="protein sequence ID" value="ABR53256.1"/>
    <property type="molecule type" value="Genomic_DNA"/>
</dbReference>
<dbReference type="SMR" id="A6U488"/>
<dbReference type="KEGG" id="sah:SaurJH1_2431"/>
<dbReference type="HOGENOM" id="CLU_000445_30_3_9"/>
<dbReference type="GO" id="GO:0005829">
    <property type="term" value="C:cytosol"/>
    <property type="evidence" value="ECO:0007669"/>
    <property type="project" value="TreeGrafter"/>
</dbReference>
<dbReference type="GO" id="GO:0032993">
    <property type="term" value="C:protein-DNA complex"/>
    <property type="evidence" value="ECO:0007669"/>
    <property type="project" value="TreeGrafter"/>
</dbReference>
<dbReference type="GO" id="GO:0000156">
    <property type="term" value="F:phosphorelay response regulator activity"/>
    <property type="evidence" value="ECO:0007669"/>
    <property type="project" value="TreeGrafter"/>
</dbReference>
<dbReference type="GO" id="GO:0000976">
    <property type="term" value="F:transcription cis-regulatory region binding"/>
    <property type="evidence" value="ECO:0007669"/>
    <property type="project" value="TreeGrafter"/>
</dbReference>
<dbReference type="GO" id="GO:0006355">
    <property type="term" value="P:regulation of DNA-templated transcription"/>
    <property type="evidence" value="ECO:0007669"/>
    <property type="project" value="InterPro"/>
</dbReference>
<dbReference type="CDD" id="cd17574">
    <property type="entry name" value="REC_OmpR"/>
    <property type="match status" value="1"/>
</dbReference>
<dbReference type="CDD" id="cd00383">
    <property type="entry name" value="trans_reg_C"/>
    <property type="match status" value="1"/>
</dbReference>
<dbReference type="FunFam" id="1.10.10.10:FF:000018">
    <property type="entry name" value="DNA-binding response regulator ResD"/>
    <property type="match status" value="1"/>
</dbReference>
<dbReference type="Gene3D" id="3.40.50.2300">
    <property type="match status" value="1"/>
</dbReference>
<dbReference type="Gene3D" id="6.10.250.690">
    <property type="match status" value="1"/>
</dbReference>
<dbReference type="Gene3D" id="1.10.10.10">
    <property type="entry name" value="Winged helix-like DNA-binding domain superfamily/Winged helix DNA-binding domain"/>
    <property type="match status" value="1"/>
</dbReference>
<dbReference type="InterPro" id="IPR011006">
    <property type="entry name" value="CheY-like_superfamily"/>
</dbReference>
<dbReference type="InterPro" id="IPR001867">
    <property type="entry name" value="OmpR/PhoB-type_DNA-bd"/>
</dbReference>
<dbReference type="InterPro" id="IPR001789">
    <property type="entry name" value="Sig_transdc_resp-reg_receiver"/>
</dbReference>
<dbReference type="InterPro" id="IPR039420">
    <property type="entry name" value="WalR-like"/>
</dbReference>
<dbReference type="InterPro" id="IPR036388">
    <property type="entry name" value="WH-like_DNA-bd_sf"/>
</dbReference>
<dbReference type="PANTHER" id="PTHR48111:SF49">
    <property type="entry name" value="HEME RESPONSE REGULATOR HSSR"/>
    <property type="match status" value="1"/>
</dbReference>
<dbReference type="PANTHER" id="PTHR48111">
    <property type="entry name" value="REGULATOR OF RPOS"/>
    <property type="match status" value="1"/>
</dbReference>
<dbReference type="Pfam" id="PF00072">
    <property type="entry name" value="Response_reg"/>
    <property type="match status" value="1"/>
</dbReference>
<dbReference type="Pfam" id="PF00486">
    <property type="entry name" value="Trans_reg_C"/>
    <property type="match status" value="1"/>
</dbReference>
<dbReference type="SMART" id="SM00448">
    <property type="entry name" value="REC"/>
    <property type="match status" value="1"/>
</dbReference>
<dbReference type="SMART" id="SM00862">
    <property type="entry name" value="Trans_reg_C"/>
    <property type="match status" value="1"/>
</dbReference>
<dbReference type="SUPFAM" id="SSF52172">
    <property type="entry name" value="CheY-like"/>
    <property type="match status" value="1"/>
</dbReference>
<dbReference type="PROSITE" id="PS51755">
    <property type="entry name" value="OMPR_PHOB"/>
    <property type="match status" value="1"/>
</dbReference>
<dbReference type="PROSITE" id="PS50110">
    <property type="entry name" value="RESPONSE_REGULATORY"/>
    <property type="match status" value="1"/>
</dbReference>
<gene>
    <name type="primary">hssR</name>
    <name type="ordered locus">SaurJH1_2431</name>
</gene>
<accession>A6U488</accession>
<protein>
    <recommendedName>
        <fullName>Heme response regulator HssR</fullName>
    </recommendedName>
</protein>
<proteinExistence type="inferred from homology"/>
<reference key="1">
    <citation type="submission" date="2007-06" db="EMBL/GenBank/DDBJ databases">
        <title>Complete sequence of chromosome of Staphylococcus aureus subsp. aureus JH1.</title>
        <authorList>
            <consortium name="US DOE Joint Genome Institute"/>
            <person name="Copeland A."/>
            <person name="Lucas S."/>
            <person name="Lapidus A."/>
            <person name="Barry K."/>
            <person name="Detter J.C."/>
            <person name="Glavina del Rio T."/>
            <person name="Hammon N."/>
            <person name="Israni S."/>
            <person name="Dalin E."/>
            <person name="Tice H."/>
            <person name="Pitluck S."/>
            <person name="Chain P."/>
            <person name="Malfatti S."/>
            <person name="Shin M."/>
            <person name="Vergez L."/>
            <person name="Schmutz J."/>
            <person name="Larimer F."/>
            <person name="Land M."/>
            <person name="Hauser L."/>
            <person name="Kyrpides N."/>
            <person name="Ivanova N."/>
            <person name="Tomasz A."/>
            <person name="Richardson P."/>
        </authorList>
    </citation>
    <scope>NUCLEOTIDE SEQUENCE [LARGE SCALE GENOMIC DNA]</scope>
    <source>
        <strain>JH1</strain>
    </source>
</reference>
<evidence type="ECO:0000250" key="1"/>
<evidence type="ECO:0000255" key="2">
    <source>
        <dbReference type="PROSITE-ProRule" id="PRU00169"/>
    </source>
</evidence>
<evidence type="ECO:0000255" key="3">
    <source>
        <dbReference type="PROSITE-ProRule" id="PRU01091"/>
    </source>
</evidence>
<evidence type="ECO:0000305" key="4"/>
<sequence length="224" mass="25946">MVQCLVVDDDPRILNYIASHLQTEHIDAYTQPSGEAALKLLEKQRVDIAVVDIMMDGMDGFQLCNTLKNDYDIPVIMLTARDALSDKERAFISGTDDYVTKPFEVKELIFRIRAVLRRYNINSNSEMTIGNLTLNQSYLELQVSNKTMTLPNKEFQLLFMLAARPKQIFTREQIIEKIWGYDYEGDERTVDVHIKRLRQRLKKLNATLTIETVRGQGYKVENHV</sequence>
<keyword id="KW-0010">Activator</keyword>
<keyword id="KW-0963">Cytoplasm</keyword>
<keyword id="KW-0238">DNA-binding</keyword>
<keyword id="KW-0597">Phosphoprotein</keyword>
<keyword id="KW-0804">Transcription</keyword>
<keyword id="KW-0805">Transcription regulation</keyword>
<keyword id="KW-0902">Two-component regulatory system</keyword>
<keyword id="KW-0843">Virulence</keyword>